<protein>
    <recommendedName>
        <fullName evidence="1">Urease accessory protein UreE 1</fullName>
    </recommendedName>
</protein>
<feature type="chain" id="PRO_0000223407" description="Urease accessory protein UreE 1">
    <location>
        <begin position="1"/>
        <end position="162"/>
    </location>
</feature>
<feature type="region of interest" description="Disordered" evidence="2">
    <location>
        <begin position="143"/>
        <end position="162"/>
    </location>
</feature>
<feature type="compositionally biased region" description="Basic and acidic residues" evidence="2">
    <location>
        <begin position="152"/>
        <end position="162"/>
    </location>
</feature>
<gene>
    <name evidence="1" type="primary">ureE1</name>
    <name type="synonym">ureE</name>
    <name type="ordered locus">BR0271</name>
    <name type="ordered locus">BS1330_I0272</name>
</gene>
<accession>Q8G2P7</accession>
<accession>G0KBX0</accession>
<reference key="1">
    <citation type="journal article" date="2002" name="Proc. Natl. Acad. Sci. U.S.A.">
        <title>The Brucella suis genome reveals fundamental similarities between animal and plant pathogens and symbionts.</title>
        <authorList>
            <person name="Paulsen I.T."/>
            <person name="Seshadri R."/>
            <person name="Nelson K.E."/>
            <person name="Eisen J.A."/>
            <person name="Heidelberg J.F."/>
            <person name="Read T.D."/>
            <person name="Dodson R.J."/>
            <person name="Umayam L.A."/>
            <person name="Brinkac L.M."/>
            <person name="Beanan M.J."/>
            <person name="Daugherty S.C."/>
            <person name="DeBoy R.T."/>
            <person name="Durkin A.S."/>
            <person name="Kolonay J.F."/>
            <person name="Madupu R."/>
            <person name="Nelson W.C."/>
            <person name="Ayodeji B."/>
            <person name="Kraul M."/>
            <person name="Shetty J."/>
            <person name="Malek J.A."/>
            <person name="Van Aken S.E."/>
            <person name="Riedmuller S."/>
            <person name="Tettelin H."/>
            <person name="Gill S.R."/>
            <person name="White O."/>
            <person name="Salzberg S.L."/>
            <person name="Hoover D.L."/>
            <person name="Lindler L.E."/>
            <person name="Halling S.M."/>
            <person name="Boyle S.M."/>
            <person name="Fraser C.M."/>
        </authorList>
    </citation>
    <scope>NUCLEOTIDE SEQUENCE [LARGE SCALE GENOMIC DNA]</scope>
    <source>
        <strain>1330</strain>
    </source>
</reference>
<reference key="2">
    <citation type="journal article" date="2011" name="J. Bacteriol.">
        <title>Revised genome sequence of Brucella suis 1330.</title>
        <authorList>
            <person name="Tae H."/>
            <person name="Shallom S."/>
            <person name="Settlage R."/>
            <person name="Preston D."/>
            <person name="Adams L.G."/>
            <person name="Garner H.R."/>
        </authorList>
    </citation>
    <scope>NUCLEOTIDE SEQUENCE [LARGE SCALE GENOMIC DNA]</scope>
    <source>
        <strain>1330</strain>
    </source>
</reference>
<reference key="3">
    <citation type="journal article" date="2007" name="BMC Microbiol.">
        <title>Brucella suis urease encoded by ure1 but not ure2 is necessary for intestinal infection of BALB/c mice.</title>
        <authorList>
            <person name="Bandara A.B."/>
            <person name="Contreras A."/>
            <person name="Contreras-Rodriguez A."/>
            <person name="Martins A.M."/>
            <person name="Dobrean V."/>
            <person name="Poff-Reichow S."/>
            <person name="Rajasekaran P."/>
            <person name="Sriranganathan N."/>
            <person name="Schurig G.G."/>
            <person name="Boyle S.M."/>
        </authorList>
    </citation>
    <scope>CHARACTERIZATION OF ROLE IN VIRULENCE</scope>
    <scope>DISRUPTION PHENOTYPE</scope>
    <source>
        <strain>1330</strain>
    </source>
</reference>
<comment type="function">
    <text evidence="1">Involved in urease metallocenter assembly. Binds nickel. Probably functions as a nickel donor during metallocenter assembly.</text>
</comment>
<comment type="subcellular location">
    <subcellularLocation>
        <location evidence="1">Cytoplasm</location>
    </subcellularLocation>
</comment>
<comment type="disruption phenotype">
    <text evidence="3">Disrupting the ure1 operon causes loss of urease activity, decreased resistance to low pH killing in vitro and decreased pathogen survival when inoculated in BALB/c mice by gavage.</text>
</comment>
<comment type="similarity">
    <text evidence="1">Belongs to the UreE family.</text>
</comment>
<dbReference type="EMBL" id="AE014291">
    <property type="protein sequence ID" value="AAN29220.1"/>
    <property type="molecule type" value="Genomic_DNA"/>
</dbReference>
<dbReference type="EMBL" id="CP002997">
    <property type="protein sequence ID" value="AEM17633.1"/>
    <property type="molecule type" value="Genomic_DNA"/>
</dbReference>
<dbReference type="RefSeq" id="WP_004690531.1">
    <property type="nucleotide sequence ID" value="NZ_KN046804.1"/>
</dbReference>
<dbReference type="SMR" id="Q8G2P7"/>
<dbReference type="GeneID" id="55590050"/>
<dbReference type="KEGG" id="bms:BR0271"/>
<dbReference type="KEGG" id="bsi:BS1330_I0272"/>
<dbReference type="PATRIC" id="fig|204722.21.peg.1754"/>
<dbReference type="HOGENOM" id="CLU_093757_1_0_5"/>
<dbReference type="PhylomeDB" id="Q8G2P7"/>
<dbReference type="Proteomes" id="UP000007104">
    <property type="component" value="Chromosome I"/>
</dbReference>
<dbReference type="GO" id="GO:0005737">
    <property type="term" value="C:cytoplasm"/>
    <property type="evidence" value="ECO:0007669"/>
    <property type="project" value="UniProtKB-SubCell"/>
</dbReference>
<dbReference type="GO" id="GO:0016151">
    <property type="term" value="F:nickel cation binding"/>
    <property type="evidence" value="ECO:0007669"/>
    <property type="project" value="UniProtKB-UniRule"/>
</dbReference>
<dbReference type="GO" id="GO:0051082">
    <property type="term" value="F:unfolded protein binding"/>
    <property type="evidence" value="ECO:0007669"/>
    <property type="project" value="UniProtKB-UniRule"/>
</dbReference>
<dbReference type="GO" id="GO:0006457">
    <property type="term" value="P:protein folding"/>
    <property type="evidence" value="ECO:0007669"/>
    <property type="project" value="InterPro"/>
</dbReference>
<dbReference type="GO" id="GO:0065003">
    <property type="term" value="P:protein-containing complex assembly"/>
    <property type="evidence" value="ECO:0007669"/>
    <property type="project" value="InterPro"/>
</dbReference>
<dbReference type="GO" id="GO:0019627">
    <property type="term" value="P:urea metabolic process"/>
    <property type="evidence" value="ECO:0007669"/>
    <property type="project" value="InterPro"/>
</dbReference>
<dbReference type="CDD" id="cd00571">
    <property type="entry name" value="UreE"/>
    <property type="match status" value="1"/>
</dbReference>
<dbReference type="Gene3D" id="2.60.260.20">
    <property type="entry name" value="Urease metallochaperone UreE, N-terminal domain"/>
    <property type="match status" value="1"/>
</dbReference>
<dbReference type="Gene3D" id="3.30.70.790">
    <property type="entry name" value="UreE, C-terminal domain"/>
    <property type="match status" value="1"/>
</dbReference>
<dbReference type="HAMAP" id="MF_00822">
    <property type="entry name" value="UreE"/>
    <property type="match status" value="1"/>
</dbReference>
<dbReference type="InterPro" id="IPR012406">
    <property type="entry name" value="UreE"/>
</dbReference>
<dbReference type="InterPro" id="IPR007864">
    <property type="entry name" value="UreE_C_dom"/>
</dbReference>
<dbReference type="InterPro" id="IPR004029">
    <property type="entry name" value="UreE_N"/>
</dbReference>
<dbReference type="InterPro" id="IPR036118">
    <property type="entry name" value="UreE_N_sf"/>
</dbReference>
<dbReference type="NCBIfam" id="NF009760">
    <property type="entry name" value="PRK13261.2-6"/>
    <property type="match status" value="1"/>
</dbReference>
<dbReference type="Pfam" id="PF05194">
    <property type="entry name" value="UreE_C"/>
    <property type="match status" value="1"/>
</dbReference>
<dbReference type="Pfam" id="PF02814">
    <property type="entry name" value="UreE_N"/>
    <property type="match status" value="1"/>
</dbReference>
<dbReference type="PIRSF" id="PIRSF036402">
    <property type="entry name" value="Ureas_acces_UreE"/>
    <property type="match status" value="1"/>
</dbReference>
<dbReference type="SMART" id="SM00988">
    <property type="entry name" value="UreE_N"/>
    <property type="match status" value="1"/>
</dbReference>
<dbReference type="SUPFAM" id="SSF69737">
    <property type="entry name" value="Urease metallochaperone UreE, C-terminal domain"/>
    <property type="match status" value="1"/>
</dbReference>
<dbReference type="SUPFAM" id="SSF69287">
    <property type="entry name" value="Urease metallochaperone UreE, N-terminal domain"/>
    <property type="match status" value="1"/>
</dbReference>
<name>UREE1_BRUSU</name>
<proteinExistence type="evidence at protein level"/>
<sequence length="162" mass="18481">MFRAIAIIRAHEVIDAVPASHIVLERDERHLRRKAITLENGEKILADFAEPVVLEHGDRLVLDDGREIEIRAASEELYEIRGRDPRHIAELAWHIGNRHLAAQIETDRIFILRDHVIRVMLEGLGATVTDVVAIFSPLRGAYSGGHQHHHGHDHDHHHPDHE</sequence>
<evidence type="ECO:0000255" key="1">
    <source>
        <dbReference type="HAMAP-Rule" id="MF_00822"/>
    </source>
</evidence>
<evidence type="ECO:0000256" key="2">
    <source>
        <dbReference type="SAM" id="MobiDB-lite"/>
    </source>
</evidence>
<evidence type="ECO:0000269" key="3">
    <source>
    </source>
</evidence>
<organism>
    <name type="scientific">Brucella suis biovar 1 (strain 1330)</name>
    <dbReference type="NCBI Taxonomy" id="204722"/>
    <lineage>
        <taxon>Bacteria</taxon>
        <taxon>Pseudomonadati</taxon>
        <taxon>Pseudomonadota</taxon>
        <taxon>Alphaproteobacteria</taxon>
        <taxon>Hyphomicrobiales</taxon>
        <taxon>Brucellaceae</taxon>
        <taxon>Brucella/Ochrobactrum group</taxon>
        <taxon>Brucella</taxon>
    </lineage>
</organism>
<keyword id="KW-0143">Chaperone</keyword>
<keyword id="KW-0963">Cytoplasm</keyword>
<keyword id="KW-0533">Nickel</keyword>
<keyword id="KW-0996">Nickel insertion</keyword>
<keyword id="KW-0843">Virulence</keyword>